<evidence type="ECO:0000255" key="1">
    <source>
        <dbReference type="HAMAP-Rule" id="MF_01080"/>
    </source>
</evidence>
<comment type="function">
    <text evidence="1">Responsible for synthesis of pseudouridine from uracil-55 in the psi GC loop of transfer RNAs.</text>
</comment>
<comment type="catalytic activity">
    <reaction evidence="1">
        <text>uridine(55) in tRNA = pseudouridine(55) in tRNA</text>
        <dbReference type="Rhea" id="RHEA:42532"/>
        <dbReference type="Rhea" id="RHEA-COMP:10101"/>
        <dbReference type="Rhea" id="RHEA-COMP:10102"/>
        <dbReference type="ChEBI" id="CHEBI:65314"/>
        <dbReference type="ChEBI" id="CHEBI:65315"/>
        <dbReference type="EC" id="5.4.99.25"/>
    </reaction>
</comment>
<comment type="similarity">
    <text evidence="1">Belongs to the pseudouridine synthase TruB family. Type 1 subfamily.</text>
</comment>
<dbReference type="EC" id="5.4.99.25" evidence="1"/>
<dbReference type="EMBL" id="CP000437">
    <property type="protein sequence ID" value="ABI82528.1"/>
    <property type="molecule type" value="Genomic_DNA"/>
</dbReference>
<dbReference type="RefSeq" id="WP_003014912.1">
    <property type="nucleotide sequence ID" value="NC_017463.1"/>
</dbReference>
<dbReference type="SMR" id="Q0BN06"/>
<dbReference type="KEGG" id="fth:FTH_0556"/>
<dbReference type="GO" id="GO:0003723">
    <property type="term" value="F:RNA binding"/>
    <property type="evidence" value="ECO:0007669"/>
    <property type="project" value="InterPro"/>
</dbReference>
<dbReference type="GO" id="GO:0160148">
    <property type="term" value="F:tRNA pseudouridine(55) synthase activity"/>
    <property type="evidence" value="ECO:0007669"/>
    <property type="project" value="UniProtKB-EC"/>
</dbReference>
<dbReference type="GO" id="GO:1990481">
    <property type="term" value="P:mRNA pseudouridine synthesis"/>
    <property type="evidence" value="ECO:0007669"/>
    <property type="project" value="TreeGrafter"/>
</dbReference>
<dbReference type="GO" id="GO:0031119">
    <property type="term" value="P:tRNA pseudouridine synthesis"/>
    <property type="evidence" value="ECO:0007669"/>
    <property type="project" value="UniProtKB-UniRule"/>
</dbReference>
<dbReference type="CDD" id="cd02573">
    <property type="entry name" value="PseudoU_synth_EcTruB"/>
    <property type="match status" value="1"/>
</dbReference>
<dbReference type="FunFam" id="3.30.2350.10:FF:000011">
    <property type="entry name" value="tRNA pseudouridine synthase B"/>
    <property type="match status" value="1"/>
</dbReference>
<dbReference type="Gene3D" id="3.30.2350.10">
    <property type="entry name" value="Pseudouridine synthase"/>
    <property type="match status" value="1"/>
</dbReference>
<dbReference type="HAMAP" id="MF_01080">
    <property type="entry name" value="TruB_bact"/>
    <property type="match status" value="1"/>
</dbReference>
<dbReference type="InterPro" id="IPR020103">
    <property type="entry name" value="PsdUridine_synth_cat_dom_sf"/>
</dbReference>
<dbReference type="InterPro" id="IPR002501">
    <property type="entry name" value="PsdUridine_synth_N"/>
</dbReference>
<dbReference type="InterPro" id="IPR014780">
    <property type="entry name" value="tRNA_psdUridine_synth_TruB"/>
</dbReference>
<dbReference type="InterPro" id="IPR032819">
    <property type="entry name" value="TruB_C"/>
</dbReference>
<dbReference type="NCBIfam" id="TIGR00431">
    <property type="entry name" value="TruB"/>
    <property type="match status" value="1"/>
</dbReference>
<dbReference type="PANTHER" id="PTHR13767:SF2">
    <property type="entry name" value="PSEUDOURIDYLATE SYNTHASE TRUB1"/>
    <property type="match status" value="1"/>
</dbReference>
<dbReference type="PANTHER" id="PTHR13767">
    <property type="entry name" value="TRNA-PSEUDOURIDINE SYNTHASE"/>
    <property type="match status" value="1"/>
</dbReference>
<dbReference type="Pfam" id="PF16198">
    <property type="entry name" value="TruB_C_2"/>
    <property type="match status" value="1"/>
</dbReference>
<dbReference type="Pfam" id="PF01509">
    <property type="entry name" value="TruB_N"/>
    <property type="match status" value="1"/>
</dbReference>
<dbReference type="SUPFAM" id="SSF55120">
    <property type="entry name" value="Pseudouridine synthase"/>
    <property type="match status" value="1"/>
</dbReference>
<name>TRUB_FRATO</name>
<organism>
    <name type="scientific">Francisella tularensis subsp. holarctica (strain OSU18)</name>
    <dbReference type="NCBI Taxonomy" id="393011"/>
    <lineage>
        <taxon>Bacteria</taxon>
        <taxon>Pseudomonadati</taxon>
        <taxon>Pseudomonadota</taxon>
        <taxon>Gammaproteobacteria</taxon>
        <taxon>Thiotrichales</taxon>
        <taxon>Francisellaceae</taxon>
        <taxon>Francisella</taxon>
    </lineage>
</organism>
<feature type="chain" id="PRO_1000084597" description="tRNA pseudouridine synthase B">
    <location>
        <begin position="1"/>
        <end position="302"/>
    </location>
</feature>
<feature type="active site" description="Nucleophile" evidence="1">
    <location>
        <position position="45"/>
    </location>
</feature>
<proteinExistence type="inferred from homology"/>
<protein>
    <recommendedName>
        <fullName evidence="1">tRNA pseudouridine synthase B</fullName>
        <ecNumber evidence="1">5.4.99.25</ecNumber>
    </recommendedName>
    <alternativeName>
        <fullName evidence="1">tRNA pseudouridine(55) synthase</fullName>
        <shortName evidence="1">Psi55 synthase</shortName>
    </alternativeName>
    <alternativeName>
        <fullName evidence="1">tRNA pseudouridylate synthase</fullName>
    </alternativeName>
    <alternativeName>
        <fullName evidence="1">tRNA-uridine isomerase</fullName>
    </alternativeName>
</protein>
<sequence>MKKNRLNLNGVVVINKAKDISSNKVLQQLKYLFNAQKAGHTGTLDPMATGVLPICFGRATKIAQYLLDADKEYIATIRLGIETDSGDAEGEIIAKSINIPELSAEYLEIVLAKFSGDVVQIPPMYSALKYNGQPLYKLAREGKTVEVKSRNIKIYELELLEFNIDSLKIRVKCSKGTYIRSLAIDIGKTLGCGGHLIALQRTQSGPFKLSEAFRLEQLKDLSFEQKIASITNIESVFIDKPIYSLLEEEKNDLYKRGLFADKPHLDGTVRIYDVEKFVAIAEFDKGKLINKKFFDQDILISE</sequence>
<keyword id="KW-0413">Isomerase</keyword>
<keyword id="KW-0819">tRNA processing</keyword>
<reference key="1">
    <citation type="journal article" date="2006" name="J. Bacteriol.">
        <title>Chromosome rearrangement and diversification of Francisella tularensis revealed by the type B (OSU18) genome sequence.</title>
        <authorList>
            <person name="Petrosino J.F."/>
            <person name="Xiang Q."/>
            <person name="Karpathy S.E."/>
            <person name="Jiang H."/>
            <person name="Yerrapragada S."/>
            <person name="Liu Y."/>
            <person name="Gioia J."/>
            <person name="Hemphill L."/>
            <person name="Gonzalez A."/>
            <person name="Raghavan T.M."/>
            <person name="Uzman A."/>
            <person name="Fox G.E."/>
            <person name="Highlander S."/>
            <person name="Reichard M."/>
            <person name="Morton R.J."/>
            <person name="Clinkenbeard K.D."/>
            <person name="Weinstock G.M."/>
        </authorList>
    </citation>
    <scope>NUCLEOTIDE SEQUENCE [LARGE SCALE GENOMIC DNA]</scope>
    <source>
        <strain>OSU18</strain>
    </source>
</reference>
<gene>
    <name evidence="1" type="primary">truB</name>
    <name type="ordered locus">FTH_0556</name>
</gene>
<accession>Q0BN06</accession>